<comment type="function">
    <text evidence="1">Catalyzes the ATP-dependent amination of UTP to CTP with either L-glutamine or ammonia as the source of nitrogen. Regulates intracellular CTP levels through interactions with the four ribonucleotide triphosphates.</text>
</comment>
<comment type="catalytic activity">
    <reaction evidence="1">
        <text>UTP + L-glutamine + ATP + H2O = CTP + L-glutamate + ADP + phosphate + 2 H(+)</text>
        <dbReference type="Rhea" id="RHEA:26426"/>
        <dbReference type="ChEBI" id="CHEBI:15377"/>
        <dbReference type="ChEBI" id="CHEBI:15378"/>
        <dbReference type="ChEBI" id="CHEBI:29985"/>
        <dbReference type="ChEBI" id="CHEBI:30616"/>
        <dbReference type="ChEBI" id="CHEBI:37563"/>
        <dbReference type="ChEBI" id="CHEBI:43474"/>
        <dbReference type="ChEBI" id="CHEBI:46398"/>
        <dbReference type="ChEBI" id="CHEBI:58359"/>
        <dbReference type="ChEBI" id="CHEBI:456216"/>
        <dbReference type="EC" id="6.3.4.2"/>
    </reaction>
</comment>
<comment type="catalytic activity">
    <reaction evidence="1">
        <text>L-glutamine + H2O = L-glutamate + NH4(+)</text>
        <dbReference type="Rhea" id="RHEA:15889"/>
        <dbReference type="ChEBI" id="CHEBI:15377"/>
        <dbReference type="ChEBI" id="CHEBI:28938"/>
        <dbReference type="ChEBI" id="CHEBI:29985"/>
        <dbReference type="ChEBI" id="CHEBI:58359"/>
    </reaction>
</comment>
<comment type="catalytic activity">
    <reaction evidence="1">
        <text>UTP + NH4(+) + ATP = CTP + ADP + phosphate + 2 H(+)</text>
        <dbReference type="Rhea" id="RHEA:16597"/>
        <dbReference type="ChEBI" id="CHEBI:15378"/>
        <dbReference type="ChEBI" id="CHEBI:28938"/>
        <dbReference type="ChEBI" id="CHEBI:30616"/>
        <dbReference type="ChEBI" id="CHEBI:37563"/>
        <dbReference type="ChEBI" id="CHEBI:43474"/>
        <dbReference type="ChEBI" id="CHEBI:46398"/>
        <dbReference type="ChEBI" id="CHEBI:456216"/>
    </reaction>
</comment>
<comment type="activity regulation">
    <text evidence="1">Allosterically activated by GTP, when glutamine is the substrate; GTP has no effect on the reaction when ammonia is the substrate. The allosteric effector GTP functions by stabilizing the protein conformation that binds the tetrahedral intermediate(s) formed during glutamine hydrolysis. Inhibited by the product CTP, via allosteric rather than competitive inhibition.</text>
</comment>
<comment type="pathway">
    <text evidence="1">Pyrimidine metabolism; CTP biosynthesis via de novo pathway; CTP from UDP: step 2/2.</text>
</comment>
<comment type="subunit">
    <text evidence="1">Homotetramer.</text>
</comment>
<comment type="miscellaneous">
    <text evidence="1">CTPSs have evolved a hybrid strategy for distinguishing between UTP and CTP. The overlapping regions of the product feedback inhibitory and substrate sites recognize a common feature in both compounds, the triphosphate moiety. To differentiate isosteric substrate and product pyrimidine rings, an additional pocket far from the expected kinase/ligase catalytic site, specifically recognizes the cytosine and ribose portions of the product inhibitor.</text>
</comment>
<comment type="similarity">
    <text evidence="1">Belongs to the CTP synthase family.</text>
</comment>
<name>PYRG_XANOM</name>
<accession>Q2P1K5</accession>
<proteinExistence type="inferred from homology"/>
<sequence length="554" mass="61559">MTPLIFVTGGVVSSLGKGIAAASLASILEARGLKVTMMKLDPYINVDPGTMSPFQHGEVYVTDDGAETDLDLGHYERYVRTRLSRKNSVTTGRIYENVIRKERRGDYLGATVQVIPHITDEIRRCIDEATAGFDVALIEIGGTVGDIESLPFLEAIRQVRTERGAEKAMFMHLTLVPYIAAAGELKTKPTQHSVKELRSIGIQPDVLLCRSEQAVPDSERRKIALFTNVSERAVISCPDIDVLYGMPLELLRQGLDELVIVQFKLRDKVAAADLSEWAAVVDAVKHPLDEVTIAVVGKYVDHQDAYKSVAEALRHGGLRQRTKVNLKWLEAQDLERSDMAALQDIDGILVPGGFGDRGFEGKVQTSKFAREHKVPYFGICYGMQAAVVDYARHVADLDAANSTENDRQSPHPVIGLITEWRTATGEVEKRDEKSDLGGTMRLGLQEQRLKPGTLARELYGKDVVAERHRHRYEFNNRYRTQLEDAGLVISGKSMDDTLVEVVELPRDTHPWFLACQAHPEFLSTPRDGHPLFIGFVRAAREKKAGGKLLKEARA</sequence>
<protein>
    <recommendedName>
        <fullName evidence="1">CTP synthase</fullName>
        <ecNumber evidence="1">6.3.4.2</ecNumber>
    </recommendedName>
    <alternativeName>
        <fullName evidence="1">Cytidine 5'-triphosphate synthase</fullName>
    </alternativeName>
    <alternativeName>
        <fullName evidence="1">Cytidine triphosphate synthetase</fullName>
        <shortName evidence="1">CTP synthetase</shortName>
        <shortName evidence="1">CTPS</shortName>
    </alternativeName>
    <alternativeName>
        <fullName evidence="1">UTP--ammonia ligase</fullName>
    </alternativeName>
</protein>
<evidence type="ECO:0000255" key="1">
    <source>
        <dbReference type="HAMAP-Rule" id="MF_01227"/>
    </source>
</evidence>
<keyword id="KW-0067">ATP-binding</keyword>
<keyword id="KW-0315">Glutamine amidotransferase</keyword>
<keyword id="KW-0436">Ligase</keyword>
<keyword id="KW-0460">Magnesium</keyword>
<keyword id="KW-0479">Metal-binding</keyword>
<keyword id="KW-0547">Nucleotide-binding</keyword>
<keyword id="KW-0665">Pyrimidine biosynthesis</keyword>
<organism>
    <name type="scientific">Xanthomonas oryzae pv. oryzae (strain MAFF 311018)</name>
    <dbReference type="NCBI Taxonomy" id="342109"/>
    <lineage>
        <taxon>Bacteria</taxon>
        <taxon>Pseudomonadati</taxon>
        <taxon>Pseudomonadota</taxon>
        <taxon>Gammaproteobacteria</taxon>
        <taxon>Lysobacterales</taxon>
        <taxon>Lysobacteraceae</taxon>
        <taxon>Xanthomonas</taxon>
    </lineage>
</organism>
<feature type="chain" id="PRO_0000266266" description="CTP synthase">
    <location>
        <begin position="1"/>
        <end position="554"/>
    </location>
</feature>
<feature type="domain" description="Glutamine amidotransferase type-1" evidence="1">
    <location>
        <begin position="292"/>
        <end position="545"/>
    </location>
</feature>
<feature type="region of interest" description="Amidoligase domain" evidence="1">
    <location>
        <begin position="1"/>
        <end position="265"/>
    </location>
</feature>
<feature type="active site" description="Nucleophile; for glutamine hydrolysis" evidence="1">
    <location>
        <position position="380"/>
    </location>
</feature>
<feature type="active site" evidence="1">
    <location>
        <position position="518"/>
    </location>
</feature>
<feature type="active site" evidence="1">
    <location>
        <position position="520"/>
    </location>
</feature>
<feature type="binding site" evidence="1">
    <location>
        <position position="13"/>
    </location>
    <ligand>
        <name>CTP</name>
        <dbReference type="ChEBI" id="CHEBI:37563"/>
        <note>allosteric inhibitor</note>
    </ligand>
</feature>
<feature type="binding site" evidence="1">
    <location>
        <position position="13"/>
    </location>
    <ligand>
        <name>UTP</name>
        <dbReference type="ChEBI" id="CHEBI:46398"/>
    </ligand>
</feature>
<feature type="binding site" evidence="1">
    <location>
        <begin position="14"/>
        <end position="19"/>
    </location>
    <ligand>
        <name>ATP</name>
        <dbReference type="ChEBI" id="CHEBI:30616"/>
    </ligand>
</feature>
<feature type="binding site" evidence="1">
    <location>
        <position position="71"/>
    </location>
    <ligand>
        <name>ATP</name>
        <dbReference type="ChEBI" id="CHEBI:30616"/>
    </ligand>
</feature>
<feature type="binding site" evidence="1">
    <location>
        <position position="71"/>
    </location>
    <ligand>
        <name>Mg(2+)</name>
        <dbReference type="ChEBI" id="CHEBI:18420"/>
    </ligand>
</feature>
<feature type="binding site" evidence="1">
    <location>
        <position position="139"/>
    </location>
    <ligand>
        <name>Mg(2+)</name>
        <dbReference type="ChEBI" id="CHEBI:18420"/>
    </ligand>
</feature>
<feature type="binding site" evidence="1">
    <location>
        <begin position="146"/>
        <end position="148"/>
    </location>
    <ligand>
        <name>CTP</name>
        <dbReference type="ChEBI" id="CHEBI:37563"/>
        <note>allosteric inhibitor</note>
    </ligand>
</feature>
<feature type="binding site" evidence="1">
    <location>
        <begin position="186"/>
        <end position="191"/>
    </location>
    <ligand>
        <name>CTP</name>
        <dbReference type="ChEBI" id="CHEBI:37563"/>
        <note>allosteric inhibitor</note>
    </ligand>
</feature>
<feature type="binding site" evidence="1">
    <location>
        <begin position="186"/>
        <end position="191"/>
    </location>
    <ligand>
        <name>UTP</name>
        <dbReference type="ChEBI" id="CHEBI:46398"/>
    </ligand>
</feature>
<feature type="binding site" evidence="1">
    <location>
        <position position="222"/>
    </location>
    <ligand>
        <name>CTP</name>
        <dbReference type="ChEBI" id="CHEBI:37563"/>
        <note>allosteric inhibitor</note>
    </ligand>
</feature>
<feature type="binding site" evidence="1">
    <location>
        <position position="222"/>
    </location>
    <ligand>
        <name>UTP</name>
        <dbReference type="ChEBI" id="CHEBI:46398"/>
    </ligand>
</feature>
<feature type="binding site" evidence="1">
    <location>
        <position position="353"/>
    </location>
    <ligand>
        <name>L-glutamine</name>
        <dbReference type="ChEBI" id="CHEBI:58359"/>
    </ligand>
</feature>
<feature type="binding site" evidence="1">
    <location>
        <begin position="381"/>
        <end position="384"/>
    </location>
    <ligand>
        <name>L-glutamine</name>
        <dbReference type="ChEBI" id="CHEBI:58359"/>
    </ligand>
</feature>
<feature type="binding site" evidence="1">
    <location>
        <position position="404"/>
    </location>
    <ligand>
        <name>L-glutamine</name>
        <dbReference type="ChEBI" id="CHEBI:58359"/>
    </ligand>
</feature>
<feature type="binding site" evidence="1">
    <location>
        <position position="471"/>
    </location>
    <ligand>
        <name>L-glutamine</name>
        <dbReference type="ChEBI" id="CHEBI:58359"/>
    </ligand>
</feature>
<reference key="1">
    <citation type="journal article" date="2005" name="Jpn. Agric. Res. Q.">
        <title>Genome sequence of Xanthomonas oryzae pv. oryzae suggests contribution of large numbers of effector genes and insertion sequences to its race diversity.</title>
        <authorList>
            <person name="Ochiai H."/>
            <person name="Inoue Y."/>
            <person name="Takeya M."/>
            <person name="Sasaki A."/>
            <person name="Kaku H."/>
        </authorList>
    </citation>
    <scope>NUCLEOTIDE SEQUENCE [LARGE SCALE GENOMIC DNA]</scope>
    <source>
        <strain>MAFF 311018</strain>
    </source>
</reference>
<gene>
    <name evidence="1" type="primary">pyrG</name>
    <name type="ordered locus">XOO2817</name>
</gene>
<dbReference type="EC" id="6.3.4.2" evidence="1"/>
<dbReference type="EMBL" id="AP008229">
    <property type="protein sequence ID" value="BAE69572.1"/>
    <property type="molecule type" value="Genomic_DNA"/>
</dbReference>
<dbReference type="RefSeq" id="WP_011259532.1">
    <property type="nucleotide sequence ID" value="NC_007705.1"/>
</dbReference>
<dbReference type="SMR" id="Q2P1K5"/>
<dbReference type="MEROPS" id="C26.964"/>
<dbReference type="KEGG" id="xom:XOO2817"/>
<dbReference type="HOGENOM" id="CLU_011675_5_0_6"/>
<dbReference type="UniPathway" id="UPA00159">
    <property type="reaction ID" value="UER00277"/>
</dbReference>
<dbReference type="GO" id="GO:0005829">
    <property type="term" value="C:cytosol"/>
    <property type="evidence" value="ECO:0007669"/>
    <property type="project" value="TreeGrafter"/>
</dbReference>
<dbReference type="GO" id="GO:0005524">
    <property type="term" value="F:ATP binding"/>
    <property type="evidence" value="ECO:0007669"/>
    <property type="project" value="UniProtKB-KW"/>
</dbReference>
<dbReference type="GO" id="GO:0003883">
    <property type="term" value="F:CTP synthase activity"/>
    <property type="evidence" value="ECO:0007669"/>
    <property type="project" value="UniProtKB-UniRule"/>
</dbReference>
<dbReference type="GO" id="GO:0004359">
    <property type="term" value="F:glutaminase activity"/>
    <property type="evidence" value="ECO:0007669"/>
    <property type="project" value="RHEA"/>
</dbReference>
<dbReference type="GO" id="GO:0042802">
    <property type="term" value="F:identical protein binding"/>
    <property type="evidence" value="ECO:0007669"/>
    <property type="project" value="TreeGrafter"/>
</dbReference>
<dbReference type="GO" id="GO:0046872">
    <property type="term" value="F:metal ion binding"/>
    <property type="evidence" value="ECO:0007669"/>
    <property type="project" value="UniProtKB-KW"/>
</dbReference>
<dbReference type="GO" id="GO:0044210">
    <property type="term" value="P:'de novo' CTP biosynthetic process"/>
    <property type="evidence" value="ECO:0007669"/>
    <property type="project" value="UniProtKB-UniRule"/>
</dbReference>
<dbReference type="GO" id="GO:0019856">
    <property type="term" value="P:pyrimidine nucleobase biosynthetic process"/>
    <property type="evidence" value="ECO:0007669"/>
    <property type="project" value="TreeGrafter"/>
</dbReference>
<dbReference type="CDD" id="cd03113">
    <property type="entry name" value="CTPS_N"/>
    <property type="match status" value="1"/>
</dbReference>
<dbReference type="CDD" id="cd01746">
    <property type="entry name" value="GATase1_CTP_Synthase"/>
    <property type="match status" value="1"/>
</dbReference>
<dbReference type="FunFam" id="3.40.50.300:FF:000009">
    <property type="entry name" value="CTP synthase"/>
    <property type="match status" value="1"/>
</dbReference>
<dbReference type="FunFam" id="3.40.50.880:FF:000002">
    <property type="entry name" value="CTP synthase"/>
    <property type="match status" value="1"/>
</dbReference>
<dbReference type="Gene3D" id="3.40.50.880">
    <property type="match status" value="1"/>
</dbReference>
<dbReference type="Gene3D" id="3.40.50.300">
    <property type="entry name" value="P-loop containing nucleotide triphosphate hydrolases"/>
    <property type="match status" value="1"/>
</dbReference>
<dbReference type="HAMAP" id="MF_01227">
    <property type="entry name" value="PyrG"/>
    <property type="match status" value="1"/>
</dbReference>
<dbReference type="InterPro" id="IPR029062">
    <property type="entry name" value="Class_I_gatase-like"/>
</dbReference>
<dbReference type="InterPro" id="IPR004468">
    <property type="entry name" value="CTP_synthase"/>
</dbReference>
<dbReference type="InterPro" id="IPR017456">
    <property type="entry name" value="CTP_synthase_N"/>
</dbReference>
<dbReference type="InterPro" id="IPR017926">
    <property type="entry name" value="GATASE"/>
</dbReference>
<dbReference type="InterPro" id="IPR033828">
    <property type="entry name" value="GATase1_CTP_Synthase"/>
</dbReference>
<dbReference type="InterPro" id="IPR027417">
    <property type="entry name" value="P-loop_NTPase"/>
</dbReference>
<dbReference type="NCBIfam" id="NF003792">
    <property type="entry name" value="PRK05380.1"/>
    <property type="match status" value="1"/>
</dbReference>
<dbReference type="NCBIfam" id="TIGR00337">
    <property type="entry name" value="PyrG"/>
    <property type="match status" value="1"/>
</dbReference>
<dbReference type="PANTHER" id="PTHR11550">
    <property type="entry name" value="CTP SYNTHASE"/>
    <property type="match status" value="1"/>
</dbReference>
<dbReference type="PANTHER" id="PTHR11550:SF0">
    <property type="entry name" value="CTP SYNTHASE-RELATED"/>
    <property type="match status" value="1"/>
</dbReference>
<dbReference type="Pfam" id="PF06418">
    <property type="entry name" value="CTP_synth_N"/>
    <property type="match status" value="1"/>
</dbReference>
<dbReference type="Pfam" id="PF00117">
    <property type="entry name" value="GATase"/>
    <property type="match status" value="1"/>
</dbReference>
<dbReference type="SUPFAM" id="SSF52317">
    <property type="entry name" value="Class I glutamine amidotransferase-like"/>
    <property type="match status" value="1"/>
</dbReference>
<dbReference type="SUPFAM" id="SSF52540">
    <property type="entry name" value="P-loop containing nucleoside triphosphate hydrolases"/>
    <property type="match status" value="1"/>
</dbReference>
<dbReference type="PROSITE" id="PS51273">
    <property type="entry name" value="GATASE_TYPE_1"/>
    <property type="match status" value="1"/>
</dbReference>